<accession>Q5F9F4</accession>
<keyword id="KW-1185">Reference proteome</keyword>
<keyword id="KW-0687">Ribonucleoprotein</keyword>
<keyword id="KW-0689">Ribosomal protein</keyword>
<keyword id="KW-0694">RNA-binding</keyword>
<keyword id="KW-0699">rRNA-binding</keyword>
<comment type="function">
    <text evidence="1">This is one of the proteins that binds to the 5S RNA in the ribosome where it forms part of the central protuberance.</text>
</comment>
<comment type="subunit">
    <text evidence="1">Part of the 50S ribosomal subunit; part of the 5S rRNA/L5/L18/L25 subcomplex. Contacts the 5S rRNA. Binds to the 5S rRNA independently of L5 and L18.</text>
</comment>
<comment type="similarity">
    <text evidence="1">Belongs to the bacterial ribosomal protein bL25 family. CTC subfamily.</text>
</comment>
<evidence type="ECO:0000255" key="1">
    <source>
        <dbReference type="HAMAP-Rule" id="MF_01334"/>
    </source>
</evidence>
<evidence type="ECO:0000305" key="2"/>
<feature type="chain" id="PRO_0000181571" description="Large ribosomal subunit protein bL25">
    <location>
        <begin position="1"/>
        <end position="190"/>
    </location>
</feature>
<protein>
    <recommendedName>
        <fullName evidence="1">Large ribosomal subunit protein bL25</fullName>
    </recommendedName>
    <alternativeName>
        <fullName evidence="2">50S ribosomal protein L25</fullName>
    </alternativeName>
    <alternativeName>
        <fullName evidence="1">General stress protein CTC</fullName>
    </alternativeName>
</protein>
<proteinExistence type="inferred from homology"/>
<sequence>MTYEIQASVREAQGTGASRRLRREGQIPGILYGEGQEPVAIAVDHKTVFYALEKESFHTALIKLSLNGETKDVIVRDFQMHPFRREVQHIDFQAVKADQLVRIRVPLHIVNAENSQAVKLQGGRVSLLNTAVEVLALPANIPAFLDLDCAEVVAGDILHLSDIKLPEGVESVSLKRNENLAVATVTGKKR</sequence>
<reference key="1">
    <citation type="submission" date="2003-03" db="EMBL/GenBank/DDBJ databases">
        <title>The complete genome sequence of Neisseria gonorrhoeae.</title>
        <authorList>
            <person name="Lewis L.A."/>
            <person name="Gillaspy A.F."/>
            <person name="McLaughlin R.E."/>
            <person name="Gipson M."/>
            <person name="Ducey T.F."/>
            <person name="Ownbey T."/>
            <person name="Hartman K."/>
            <person name="Nydick C."/>
            <person name="Carson M.B."/>
            <person name="Vaughn J."/>
            <person name="Thomson C."/>
            <person name="Song L."/>
            <person name="Lin S."/>
            <person name="Yuan X."/>
            <person name="Najar F."/>
            <person name="Zhan M."/>
            <person name="Ren Q."/>
            <person name="Zhu H."/>
            <person name="Qi S."/>
            <person name="Kenton S.M."/>
            <person name="Lai H."/>
            <person name="White J.D."/>
            <person name="Clifton S."/>
            <person name="Roe B.A."/>
            <person name="Dyer D.W."/>
        </authorList>
    </citation>
    <scope>NUCLEOTIDE SEQUENCE [LARGE SCALE GENOMIC DNA]</scope>
    <source>
        <strain>ATCC 700825 / FA 1090</strain>
    </source>
</reference>
<name>RL25_NEIG1</name>
<organism>
    <name type="scientific">Neisseria gonorrhoeae (strain ATCC 700825 / FA 1090)</name>
    <dbReference type="NCBI Taxonomy" id="242231"/>
    <lineage>
        <taxon>Bacteria</taxon>
        <taxon>Pseudomonadati</taxon>
        <taxon>Pseudomonadota</taxon>
        <taxon>Betaproteobacteria</taxon>
        <taxon>Neisseriales</taxon>
        <taxon>Neisseriaceae</taxon>
        <taxon>Neisseria</taxon>
    </lineage>
</organism>
<dbReference type="EMBL" id="AE004969">
    <property type="protein sequence ID" value="AAW89183.1"/>
    <property type="molecule type" value="Genomic_DNA"/>
</dbReference>
<dbReference type="RefSeq" id="WP_003687901.1">
    <property type="nucleotide sequence ID" value="NC_002946.2"/>
</dbReference>
<dbReference type="RefSeq" id="YP_207595.1">
    <property type="nucleotide sequence ID" value="NC_002946.2"/>
</dbReference>
<dbReference type="SMR" id="Q5F9F4"/>
<dbReference type="STRING" id="242231.NGO_0442"/>
<dbReference type="KEGG" id="ngo:NGO_0442"/>
<dbReference type="PATRIC" id="fig|242231.10.peg.529"/>
<dbReference type="HOGENOM" id="CLU_075939_0_1_4"/>
<dbReference type="Proteomes" id="UP000000535">
    <property type="component" value="Chromosome"/>
</dbReference>
<dbReference type="GO" id="GO:0022625">
    <property type="term" value="C:cytosolic large ribosomal subunit"/>
    <property type="evidence" value="ECO:0007669"/>
    <property type="project" value="TreeGrafter"/>
</dbReference>
<dbReference type="GO" id="GO:0008097">
    <property type="term" value="F:5S rRNA binding"/>
    <property type="evidence" value="ECO:0007669"/>
    <property type="project" value="InterPro"/>
</dbReference>
<dbReference type="GO" id="GO:0003735">
    <property type="term" value="F:structural constituent of ribosome"/>
    <property type="evidence" value="ECO:0007669"/>
    <property type="project" value="InterPro"/>
</dbReference>
<dbReference type="GO" id="GO:0006412">
    <property type="term" value="P:translation"/>
    <property type="evidence" value="ECO:0007669"/>
    <property type="project" value="UniProtKB-UniRule"/>
</dbReference>
<dbReference type="CDD" id="cd00495">
    <property type="entry name" value="Ribosomal_L25_TL5_CTC"/>
    <property type="match status" value="1"/>
</dbReference>
<dbReference type="FunFam" id="2.170.120.20:FF:000003">
    <property type="entry name" value="50S ribosomal protein L25"/>
    <property type="match status" value="1"/>
</dbReference>
<dbReference type="FunFam" id="2.40.240.10:FF:000002">
    <property type="entry name" value="50S ribosomal protein L25"/>
    <property type="match status" value="1"/>
</dbReference>
<dbReference type="Gene3D" id="2.170.120.20">
    <property type="entry name" value="Ribosomal protein L25, beta domain"/>
    <property type="match status" value="1"/>
</dbReference>
<dbReference type="Gene3D" id="2.40.240.10">
    <property type="entry name" value="Ribosomal Protein L25, Chain P"/>
    <property type="match status" value="1"/>
</dbReference>
<dbReference type="HAMAP" id="MF_01336">
    <property type="entry name" value="Ribosomal_bL25"/>
    <property type="match status" value="1"/>
</dbReference>
<dbReference type="HAMAP" id="MF_01334">
    <property type="entry name" value="Ribosomal_bL25_CTC"/>
    <property type="match status" value="1"/>
</dbReference>
<dbReference type="InterPro" id="IPR020056">
    <property type="entry name" value="Rbsml_bL25/Gln-tRNA_synth_N"/>
</dbReference>
<dbReference type="InterPro" id="IPR011035">
    <property type="entry name" value="Ribosomal_bL25/Gln-tRNA_synth"/>
</dbReference>
<dbReference type="InterPro" id="IPR020057">
    <property type="entry name" value="Ribosomal_bL25_b-dom"/>
</dbReference>
<dbReference type="InterPro" id="IPR037121">
    <property type="entry name" value="Ribosomal_bL25_C"/>
</dbReference>
<dbReference type="InterPro" id="IPR001021">
    <property type="entry name" value="Ribosomal_bL25_long"/>
</dbReference>
<dbReference type="InterPro" id="IPR020055">
    <property type="entry name" value="Ribosomal_bL25_short"/>
</dbReference>
<dbReference type="InterPro" id="IPR029751">
    <property type="entry name" value="Ribosomal_L25_dom"/>
</dbReference>
<dbReference type="InterPro" id="IPR020930">
    <property type="entry name" value="Ribosomal_uL5_bac-type"/>
</dbReference>
<dbReference type="NCBIfam" id="TIGR00731">
    <property type="entry name" value="bL25_bact_ctc"/>
    <property type="match status" value="1"/>
</dbReference>
<dbReference type="NCBIfam" id="NF004128">
    <property type="entry name" value="PRK05618.1-2"/>
    <property type="match status" value="1"/>
</dbReference>
<dbReference type="NCBIfam" id="NF004130">
    <property type="entry name" value="PRK05618.1-5"/>
    <property type="match status" value="1"/>
</dbReference>
<dbReference type="NCBIfam" id="NF004612">
    <property type="entry name" value="PRK05943.1"/>
    <property type="match status" value="1"/>
</dbReference>
<dbReference type="PANTHER" id="PTHR33284">
    <property type="entry name" value="RIBOSOMAL PROTEIN L25/GLN-TRNA SYNTHETASE, ANTI-CODON-BINDING DOMAIN-CONTAINING PROTEIN"/>
    <property type="match status" value="1"/>
</dbReference>
<dbReference type="PANTHER" id="PTHR33284:SF1">
    <property type="entry name" value="RIBOSOMAL PROTEIN L25_GLN-TRNA SYNTHETASE, ANTI-CODON-BINDING DOMAIN-CONTAINING PROTEIN"/>
    <property type="match status" value="1"/>
</dbReference>
<dbReference type="Pfam" id="PF01386">
    <property type="entry name" value="Ribosomal_L25p"/>
    <property type="match status" value="1"/>
</dbReference>
<dbReference type="Pfam" id="PF14693">
    <property type="entry name" value="Ribosomal_TL5_C"/>
    <property type="match status" value="1"/>
</dbReference>
<dbReference type="SUPFAM" id="SSF50715">
    <property type="entry name" value="Ribosomal protein L25-like"/>
    <property type="match status" value="1"/>
</dbReference>
<gene>
    <name evidence="1" type="primary">rplY</name>
    <name evidence="1" type="synonym">ctc</name>
    <name type="ordered locus">NGO_0442</name>
</gene>